<accession>B6J667</accession>
<sequence length="592" mass="66775">MIDLSTMKQQIETLLNQAIERLKTKGVLKPEVTPVIKITHTTDPQHGDFATNLALTLSKAAGMSPHALAEKIVEALPPSGQITEVEIAGPGFINFFVTEGSYQTVVSSILKAGKDYGRSEMGKGQRVHMEYVSANPTGPLHVGHGRGAAYGACVANLLNAAGFEVHREYYVNDAGRQMGILALSVWVRYLQGYEASIELPKNAYQGEYIIDIAEALKAKYGKQFYHSVESIQAKIPEEIDSNADPEAYLDAWVTAQKDLLGPKDFECVFQAALDSILNDIKNDLEEFSVTYDDWFPESRLVREGLIQEGLDLLTKHGYVYEKNGAQWFRATALGDEKDRVLFRKNGLPTYFAADVAYHLHKFNQGYDQIIDIFGADHHGYIPRIRGFLKGLGKAPEKLHILLVQFAILYRGNEKVSMSTRGGTFVTLRELRHEVGNDAARFFYIMRKPDQHLDFDLELAKSQSNENPVYYIQYAHARICSVFRQLKTTQKNWDRPRGMENLSLLSTNHEKELLATLGRYPEVIKRAAMNYAPHLLAHYLQTLANQFHTYYNAERFLIEDDNLRNARLNLINAVQQIIRNGLTLLGVSAPEEM</sequence>
<keyword id="KW-0030">Aminoacyl-tRNA synthetase</keyword>
<keyword id="KW-0067">ATP-binding</keyword>
<keyword id="KW-0963">Cytoplasm</keyword>
<keyword id="KW-0436">Ligase</keyword>
<keyword id="KW-0547">Nucleotide-binding</keyword>
<keyword id="KW-0648">Protein biosynthesis</keyword>
<evidence type="ECO:0000255" key="1">
    <source>
        <dbReference type="HAMAP-Rule" id="MF_00123"/>
    </source>
</evidence>
<gene>
    <name evidence="1" type="primary">argS</name>
    <name type="ordered locus">CbuK_2059</name>
</gene>
<proteinExistence type="inferred from homology"/>
<feature type="chain" id="PRO_1000095354" description="Arginine--tRNA ligase">
    <location>
        <begin position="1"/>
        <end position="592"/>
    </location>
</feature>
<feature type="short sequence motif" description="'HIGH' region">
    <location>
        <begin position="134"/>
        <end position="144"/>
    </location>
</feature>
<name>SYR_COXB1</name>
<dbReference type="EC" id="6.1.1.19" evidence="1"/>
<dbReference type="EMBL" id="CP001020">
    <property type="protein sequence ID" value="ACJ21158.1"/>
    <property type="molecule type" value="Genomic_DNA"/>
</dbReference>
<dbReference type="RefSeq" id="WP_012570937.1">
    <property type="nucleotide sequence ID" value="NC_011528.1"/>
</dbReference>
<dbReference type="SMR" id="B6J667"/>
<dbReference type="KEGG" id="cbc:CbuK_2059"/>
<dbReference type="HOGENOM" id="CLU_006406_0_1_6"/>
<dbReference type="GO" id="GO:0005737">
    <property type="term" value="C:cytoplasm"/>
    <property type="evidence" value="ECO:0007669"/>
    <property type="project" value="UniProtKB-SubCell"/>
</dbReference>
<dbReference type="GO" id="GO:0004814">
    <property type="term" value="F:arginine-tRNA ligase activity"/>
    <property type="evidence" value="ECO:0007669"/>
    <property type="project" value="UniProtKB-UniRule"/>
</dbReference>
<dbReference type="GO" id="GO:0005524">
    <property type="term" value="F:ATP binding"/>
    <property type="evidence" value="ECO:0007669"/>
    <property type="project" value="UniProtKB-UniRule"/>
</dbReference>
<dbReference type="GO" id="GO:0006420">
    <property type="term" value="P:arginyl-tRNA aminoacylation"/>
    <property type="evidence" value="ECO:0007669"/>
    <property type="project" value="UniProtKB-UniRule"/>
</dbReference>
<dbReference type="CDD" id="cd07956">
    <property type="entry name" value="Anticodon_Ia_Arg"/>
    <property type="match status" value="1"/>
</dbReference>
<dbReference type="CDD" id="cd00671">
    <property type="entry name" value="ArgRS_core"/>
    <property type="match status" value="1"/>
</dbReference>
<dbReference type="FunFam" id="1.10.730.10:FF:000008">
    <property type="entry name" value="Arginine--tRNA ligase"/>
    <property type="match status" value="1"/>
</dbReference>
<dbReference type="FunFam" id="3.30.1360.70:FF:000003">
    <property type="entry name" value="Arginine--tRNA ligase"/>
    <property type="match status" value="1"/>
</dbReference>
<dbReference type="Gene3D" id="3.30.1360.70">
    <property type="entry name" value="Arginyl tRNA synthetase N-terminal domain"/>
    <property type="match status" value="1"/>
</dbReference>
<dbReference type="Gene3D" id="3.40.50.620">
    <property type="entry name" value="HUPs"/>
    <property type="match status" value="1"/>
</dbReference>
<dbReference type="Gene3D" id="1.10.730.10">
    <property type="entry name" value="Isoleucyl-tRNA Synthetase, Domain 1"/>
    <property type="match status" value="1"/>
</dbReference>
<dbReference type="HAMAP" id="MF_00123">
    <property type="entry name" value="Arg_tRNA_synth"/>
    <property type="match status" value="1"/>
</dbReference>
<dbReference type="InterPro" id="IPR001412">
    <property type="entry name" value="aa-tRNA-synth_I_CS"/>
</dbReference>
<dbReference type="InterPro" id="IPR001278">
    <property type="entry name" value="Arg-tRNA-ligase"/>
</dbReference>
<dbReference type="InterPro" id="IPR005148">
    <property type="entry name" value="Arg-tRNA-synth_N"/>
</dbReference>
<dbReference type="InterPro" id="IPR036695">
    <property type="entry name" value="Arg-tRNA-synth_N_sf"/>
</dbReference>
<dbReference type="InterPro" id="IPR035684">
    <property type="entry name" value="ArgRS_core"/>
</dbReference>
<dbReference type="InterPro" id="IPR008909">
    <property type="entry name" value="DALR_anticod-bd"/>
</dbReference>
<dbReference type="InterPro" id="IPR014729">
    <property type="entry name" value="Rossmann-like_a/b/a_fold"/>
</dbReference>
<dbReference type="InterPro" id="IPR009080">
    <property type="entry name" value="tRNAsynth_Ia_anticodon-bd"/>
</dbReference>
<dbReference type="NCBIfam" id="TIGR00456">
    <property type="entry name" value="argS"/>
    <property type="match status" value="1"/>
</dbReference>
<dbReference type="PANTHER" id="PTHR11956:SF5">
    <property type="entry name" value="ARGININE--TRNA LIGASE, CYTOPLASMIC"/>
    <property type="match status" value="1"/>
</dbReference>
<dbReference type="PANTHER" id="PTHR11956">
    <property type="entry name" value="ARGINYL-TRNA SYNTHETASE"/>
    <property type="match status" value="1"/>
</dbReference>
<dbReference type="Pfam" id="PF03485">
    <property type="entry name" value="Arg_tRNA_synt_N"/>
    <property type="match status" value="1"/>
</dbReference>
<dbReference type="Pfam" id="PF05746">
    <property type="entry name" value="DALR_1"/>
    <property type="match status" value="1"/>
</dbReference>
<dbReference type="Pfam" id="PF00750">
    <property type="entry name" value="tRNA-synt_1d"/>
    <property type="match status" value="1"/>
</dbReference>
<dbReference type="PRINTS" id="PR01038">
    <property type="entry name" value="TRNASYNTHARG"/>
</dbReference>
<dbReference type="SMART" id="SM01016">
    <property type="entry name" value="Arg_tRNA_synt_N"/>
    <property type="match status" value="1"/>
</dbReference>
<dbReference type="SMART" id="SM00836">
    <property type="entry name" value="DALR_1"/>
    <property type="match status" value="1"/>
</dbReference>
<dbReference type="SUPFAM" id="SSF47323">
    <property type="entry name" value="Anticodon-binding domain of a subclass of class I aminoacyl-tRNA synthetases"/>
    <property type="match status" value="1"/>
</dbReference>
<dbReference type="SUPFAM" id="SSF55190">
    <property type="entry name" value="Arginyl-tRNA synthetase (ArgRS), N-terminal 'additional' domain"/>
    <property type="match status" value="1"/>
</dbReference>
<dbReference type="SUPFAM" id="SSF52374">
    <property type="entry name" value="Nucleotidylyl transferase"/>
    <property type="match status" value="1"/>
</dbReference>
<dbReference type="PROSITE" id="PS00178">
    <property type="entry name" value="AA_TRNA_LIGASE_I"/>
    <property type="match status" value="1"/>
</dbReference>
<comment type="catalytic activity">
    <reaction evidence="1">
        <text>tRNA(Arg) + L-arginine + ATP = L-arginyl-tRNA(Arg) + AMP + diphosphate</text>
        <dbReference type="Rhea" id="RHEA:20301"/>
        <dbReference type="Rhea" id="RHEA-COMP:9658"/>
        <dbReference type="Rhea" id="RHEA-COMP:9673"/>
        <dbReference type="ChEBI" id="CHEBI:30616"/>
        <dbReference type="ChEBI" id="CHEBI:32682"/>
        <dbReference type="ChEBI" id="CHEBI:33019"/>
        <dbReference type="ChEBI" id="CHEBI:78442"/>
        <dbReference type="ChEBI" id="CHEBI:78513"/>
        <dbReference type="ChEBI" id="CHEBI:456215"/>
        <dbReference type="EC" id="6.1.1.19"/>
    </reaction>
</comment>
<comment type="subunit">
    <text evidence="1">Monomer.</text>
</comment>
<comment type="subcellular location">
    <subcellularLocation>
        <location evidence="1">Cytoplasm</location>
    </subcellularLocation>
</comment>
<comment type="similarity">
    <text evidence="1">Belongs to the class-I aminoacyl-tRNA synthetase family.</text>
</comment>
<protein>
    <recommendedName>
        <fullName evidence="1">Arginine--tRNA ligase</fullName>
        <ecNumber evidence="1">6.1.1.19</ecNumber>
    </recommendedName>
    <alternativeName>
        <fullName evidence="1">Arginyl-tRNA synthetase</fullName>
        <shortName evidence="1">ArgRS</shortName>
    </alternativeName>
</protein>
<organism>
    <name type="scientific">Coxiella burnetii (strain CbuK_Q154)</name>
    <name type="common">Coxiella burnetii (strain Q154)</name>
    <dbReference type="NCBI Taxonomy" id="434924"/>
    <lineage>
        <taxon>Bacteria</taxon>
        <taxon>Pseudomonadati</taxon>
        <taxon>Pseudomonadota</taxon>
        <taxon>Gammaproteobacteria</taxon>
        <taxon>Legionellales</taxon>
        <taxon>Coxiellaceae</taxon>
        <taxon>Coxiella</taxon>
    </lineage>
</organism>
<reference key="1">
    <citation type="journal article" date="2009" name="Infect. Immun.">
        <title>Comparative genomics reveal extensive transposon-mediated genomic plasticity and diversity among potential effector proteins within the genus Coxiella.</title>
        <authorList>
            <person name="Beare P.A."/>
            <person name="Unsworth N."/>
            <person name="Andoh M."/>
            <person name="Voth D.E."/>
            <person name="Omsland A."/>
            <person name="Gilk S.D."/>
            <person name="Williams K.P."/>
            <person name="Sobral B.W."/>
            <person name="Kupko J.J. III"/>
            <person name="Porcella S.F."/>
            <person name="Samuel J.E."/>
            <person name="Heinzen R.A."/>
        </authorList>
    </citation>
    <scope>NUCLEOTIDE SEQUENCE [LARGE SCALE GENOMIC DNA]</scope>
    <source>
        <strain>CbuK_Q154</strain>
    </source>
</reference>